<feature type="chain" id="PRO_0000357915" description="NADH-quinone oxidoreductase subunit D">
    <location>
        <begin position="1"/>
        <end position="391"/>
    </location>
</feature>
<evidence type="ECO:0000255" key="1">
    <source>
        <dbReference type="HAMAP-Rule" id="MF_01358"/>
    </source>
</evidence>
<gene>
    <name evidence="1" type="primary">nuoD</name>
    <name type="ordered locus">A1G_02740</name>
</gene>
<protein>
    <recommendedName>
        <fullName evidence="1">NADH-quinone oxidoreductase subunit D</fullName>
        <ecNumber evidence="1">7.1.1.-</ecNumber>
    </recommendedName>
    <alternativeName>
        <fullName evidence="1">NADH dehydrogenase I subunit D</fullName>
    </alternativeName>
    <alternativeName>
        <fullName evidence="1">NDH-1 subunit D</fullName>
    </alternativeName>
</protein>
<name>NUOD_RICRS</name>
<organism>
    <name type="scientific">Rickettsia rickettsii (strain Sheila Smith)</name>
    <dbReference type="NCBI Taxonomy" id="392021"/>
    <lineage>
        <taxon>Bacteria</taxon>
        <taxon>Pseudomonadati</taxon>
        <taxon>Pseudomonadota</taxon>
        <taxon>Alphaproteobacteria</taxon>
        <taxon>Rickettsiales</taxon>
        <taxon>Rickettsiaceae</taxon>
        <taxon>Rickettsieae</taxon>
        <taxon>Rickettsia</taxon>
        <taxon>spotted fever group</taxon>
    </lineage>
</organism>
<keyword id="KW-0997">Cell inner membrane</keyword>
<keyword id="KW-1003">Cell membrane</keyword>
<keyword id="KW-0472">Membrane</keyword>
<keyword id="KW-0520">NAD</keyword>
<keyword id="KW-0874">Quinone</keyword>
<keyword id="KW-1278">Translocase</keyword>
<keyword id="KW-0813">Transport</keyword>
<keyword id="KW-0830">Ubiquinone</keyword>
<reference key="1">
    <citation type="submission" date="2007-09" db="EMBL/GenBank/DDBJ databases">
        <title>Complete genome sequence of Rickettsia rickettsii.</title>
        <authorList>
            <person name="Madan A."/>
            <person name="Fahey J."/>
            <person name="Helton E."/>
            <person name="Ketteman M."/>
            <person name="Madan A."/>
            <person name="Rodrigues S."/>
            <person name="Sanchez A."/>
            <person name="Dasch G."/>
            <person name="Eremeeva M."/>
        </authorList>
    </citation>
    <scope>NUCLEOTIDE SEQUENCE [LARGE SCALE GENOMIC DNA]</scope>
    <source>
        <strain>Sheila Smith</strain>
    </source>
</reference>
<dbReference type="EC" id="7.1.1.-" evidence="1"/>
<dbReference type="EMBL" id="CP000848">
    <property type="protein sequence ID" value="ABV76090.1"/>
    <property type="molecule type" value="Genomic_DNA"/>
</dbReference>
<dbReference type="RefSeq" id="WP_012150684.1">
    <property type="nucleotide sequence ID" value="NZ_CP121767.1"/>
</dbReference>
<dbReference type="SMR" id="A8GRR5"/>
<dbReference type="GeneID" id="79937242"/>
<dbReference type="KEGG" id="rri:A1G_02740"/>
<dbReference type="HOGENOM" id="CLU_015134_1_2_5"/>
<dbReference type="Proteomes" id="UP000006832">
    <property type="component" value="Chromosome"/>
</dbReference>
<dbReference type="GO" id="GO:0005886">
    <property type="term" value="C:plasma membrane"/>
    <property type="evidence" value="ECO:0007669"/>
    <property type="project" value="UniProtKB-SubCell"/>
</dbReference>
<dbReference type="GO" id="GO:0051287">
    <property type="term" value="F:NAD binding"/>
    <property type="evidence" value="ECO:0007669"/>
    <property type="project" value="InterPro"/>
</dbReference>
<dbReference type="GO" id="GO:0050136">
    <property type="term" value="F:NADH:ubiquinone reductase (non-electrogenic) activity"/>
    <property type="evidence" value="ECO:0007669"/>
    <property type="project" value="UniProtKB-UniRule"/>
</dbReference>
<dbReference type="GO" id="GO:0048038">
    <property type="term" value="F:quinone binding"/>
    <property type="evidence" value="ECO:0007669"/>
    <property type="project" value="UniProtKB-KW"/>
</dbReference>
<dbReference type="FunFam" id="1.10.645.10:FF:000005">
    <property type="entry name" value="NADH-quinone oxidoreductase subunit D"/>
    <property type="match status" value="1"/>
</dbReference>
<dbReference type="Gene3D" id="1.10.645.10">
    <property type="entry name" value="Cytochrome-c3 Hydrogenase, chain B"/>
    <property type="match status" value="1"/>
</dbReference>
<dbReference type="HAMAP" id="MF_01358">
    <property type="entry name" value="NDH1_NuoD"/>
    <property type="match status" value="1"/>
</dbReference>
<dbReference type="InterPro" id="IPR001135">
    <property type="entry name" value="NADH_Q_OxRdtase_suD"/>
</dbReference>
<dbReference type="InterPro" id="IPR014029">
    <property type="entry name" value="NADH_UbQ_OxRdtase_49kDa_CS"/>
</dbReference>
<dbReference type="InterPro" id="IPR022885">
    <property type="entry name" value="NDH1_su_D/H"/>
</dbReference>
<dbReference type="InterPro" id="IPR029014">
    <property type="entry name" value="NiFe-Hase_large"/>
</dbReference>
<dbReference type="NCBIfam" id="TIGR01962">
    <property type="entry name" value="NuoD"/>
    <property type="match status" value="1"/>
</dbReference>
<dbReference type="NCBIfam" id="NF004739">
    <property type="entry name" value="PRK06075.1"/>
    <property type="match status" value="1"/>
</dbReference>
<dbReference type="PANTHER" id="PTHR11993:SF10">
    <property type="entry name" value="NADH DEHYDROGENASE [UBIQUINONE] IRON-SULFUR PROTEIN 2, MITOCHONDRIAL"/>
    <property type="match status" value="1"/>
</dbReference>
<dbReference type="PANTHER" id="PTHR11993">
    <property type="entry name" value="NADH-UBIQUINONE OXIDOREDUCTASE 49 KDA SUBUNIT"/>
    <property type="match status" value="1"/>
</dbReference>
<dbReference type="Pfam" id="PF00346">
    <property type="entry name" value="Complex1_49kDa"/>
    <property type="match status" value="1"/>
</dbReference>
<dbReference type="SUPFAM" id="SSF56762">
    <property type="entry name" value="HydB/Nqo4-like"/>
    <property type="match status" value="1"/>
</dbReference>
<dbReference type="PROSITE" id="PS00535">
    <property type="entry name" value="COMPLEX1_49K"/>
    <property type="match status" value="1"/>
</dbReference>
<sequence>MTNNTKTITLNLGPQHPATHGVLRLILEMDGEVVNNADPHIGLLHRGTEKLIEHKTYLQAIPYFDRLDYVSPMCQEHAFALAVESLLECKVPRRAQFIRVLFSELTRILNHTLNIGSQALDIGATTPLLWLFEEREKIMEFYEHVSGSRMHSNYFRPGGVVADLPEGLLEDIDKFIEQFPPKLHDIESLLNENRLWKQRLVDIGVVSQKEAMDWGFSGPMLRGSGIAWDLRKSNPYDVYDEMDFKVPIGKNGDCYDRYFVRMLEMYESIKIIKQCIEKMPKGAIKTDDPKLTPPTRAKMKESMEAMIHHFKLYTEGYDVPAGETYKAVEAPKGEFGVYLYSRGGNRPYRCRIKAPGFAHLQGLDFMSQGHLMADVITIIATLDIVFGEIDR</sequence>
<comment type="function">
    <text evidence="1">NDH-1 shuttles electrons from NADH, via FMN and iron-sulfur (Fe-S) centers, to quinones in the respiratory chain. The immediate electron acceptor for the enzyme in this species is believed to be ubiquinone. Couples the redox reaction to proton translocation (for every two electrons transferred, four hydrogen ions are translocated across the cytoplasmic membrane), and thus conserves the redox energy in a proton gradient.</text>
</comment>
<comment type="catalytic activity">
    <reaction evidence="1">
        <text>a quinone + NADH + 5 H(+)(in) = a quinol + NAD(+) + 4 H(+)(out)</text>
        <dbReference type="Rhea" id="RHEA:57888"/>
        <dbReference type="ChEBI" id="CHEBI:15378"/>
        <dbReference type="ChEBI" id="CHEBI:24646"/>
        <dbReference type="ChEBI" id="CHEBI:57540"/>
        <dbReference type="ChEBI" id="CHEBI:57945"/>
        <dbReference type="ChEBI" id="CHEBI:132124"/>
    </reaction>
</comment>
<comment type="subunit">
    <text evidence="1">NDH-1 is composed of 14 different subunits. Subunits NuoB, C, D, E, F, and G constitute the peripheral sector of the complex.</text>
</comment>
<comment type="subcellular location">
    <subcellularLocation>
        <location evidence="1">Cell inner membrane</location>
        <topology evidence="1">Peripheral membrane protein</topology>
        <orientation evidence="1">Cytoplasmic side</orientation>
    </subcellularLocation>
</comment>
<comment type="similarity">
    <text evidence="1">Belongs to the complex I 49 kDa subunit family.</text>
</comment>
<proteinExistence type="inferred from homology"/>
<accession>A8GRR5</accession>